<organism>
    <name type="scientific">Centruroides limpidus</name>
    <name type="common">Mexican scorpion</name>
    <dbReference type="NCBI Taxonomy" id="6876"/>
    <lineage>
        <taxon>Eukaryota</taxon>
        <taxon>Metazoa</taxon>
        <taxon>Ecdysozoa</taxon>
        <taxon>Arthropoda</taxon>
        <taxon>Chelicerata</taxon>
        <taxon>Arachnida</taxon>
        <taxon>Scorpiones</taxon>
        <taxon>Buthida</taxon>
        <taxon>Buthoidea</taxon>
        <taxon>Buthidae</taxon>
        <taxon>Centruroides</taxon>
    </lineage>
</organism>
<keyword id="KW-0027">Amidation</keyword>
<keyword id="KW-1015">Disulfide bond</keyword>
<keyword id="KW-0872">Ion channel impairing toxin</keyword>
<keyword id="KW-0528">Neurotoxin</keyword>
<keyword id="KW-0964">Secreted</keyword>
<keyword id="KW-0732">Signal</keyword>
<keyword id="KW-0800">Toxin</keyword>
<keyword id="KW-0738">Voltage-gated sodium channel impairing toxin</keyword>
<evidence type="ECO:0000250" key="1"/>
<evidence type="ECO:0000255" key="2">
    <source>
        <dbReference type="PROSITE-ProRule" id="PRU01210"/>
    </source>
</evidence>
<evidence type="ECO:0000305" key="3"/>
<name>SCX4_CENLI</name>
<proteinExistence type="evidence at transcript level"/>
<reference key="1">
    <citation type="submission" date="2002-03" db="EMBL/GenBank/DDBJ databases">
        <title>Genes and peptides from the scorpion Centruroides limpidus limpidus, that recognize Na(+)-channels.</title>
        <authorList>
            <person name="Corona M."/>
            <person name="Possani L.D."/>
        </authorList>
    </citation>
    <scope>NUCLEOTIDE SEQUENCE [MRNA]</scope>
</reference>
<sequence>MNSLLMITACLALIGTVWAKEGYIVNYHDGCKYECYKLGDNDYCLRECKLRYGKGAGGYCYAFGCWCTHLYEQAVVWPLPKKRCNGK</sequence>
<accession>Q7Z1K8</accession>
<comment type="function">
    <text evidence="1">Beta toxins bind voltage-independently at site-4 of sodium channels (Nav) and shift the voltage of activation toward more negative potentials thereby affecting sodium channel activation and promoting spontaneous and repetitive firing.</text>
</comment>
<comment type="subcellular location">
    <subcellularLocation>
        <location evidence="1">Secreted</location>
    </subcellularLocation>
</comment>
<comment type="tissue specificity">
    <text>Expressed by the venom gland.</text>
</comment>
<comment type="domain">
    <text evidence="3">Has the structural arrangement of an alpha-helix connected to antiparallel beta-sheets by disulfide bonds (CS-alpha/beta).</text>
</comment>
<comment type="similarity">
    <text evidence="3">Belongs to the long (4 C-C) scorpion toxin superfamily. Sodium channel inhibitor family. Beta subfamily.</text>
</comment>
<feature type="signal peptide" evidence="1">
    <location>
        <begin position="1"/>
        <end position="19"/>
    </location>
</feature>
<feature type="chain" id="PRO_0000035268" description="Toxin Cll4">
    <location>
        <begin position="20"/>
        <end position="85"/>
    </location>
</feature>
<feature type="domain" description="LCN-type CS-alpha/beta" evidence="2">
    <location>
        <begin position="20"/>
        <end position="85"/>
    </location>
</feature>
<feature type="modified residue" description="Asparagine amide" evidence="1">
    <location>
        <position position="85"/>
    </location>
</feature>
<feature type="disulfide bond" evidence="2">
    <location>
        <begin position="31"/>
        <end position="84"/>
    </location>
</feature>
<feature type="disulfide bond" evidence="2">
    <location>
        <begin position="35"/>
        <end position="60"/>
    </location>
</feature>
<feature type="disulfide bond" evidence="2">
    <location>
        <begin position="44"/>
        <end position="65"/>
    </location>
</feature>
<feature type="disulfide bond" evidence="2">
    <location>
        <begin position="48"/>
        <end position="67"/>
    </location>
</feature>
<protein>
    <recommendedName>
        <fullName>Toxin Cll4</fullName>
    </recommendedName>
</protein>
<dbReference type="EMBL" id="AF491128">
    <property type="protein sequence ID" value="AAP49503.1"/>
    <property type="molecule type" value="mRNA"/>
</dbReference>
<dbReference type="SMR" id="Q7Z1K8"/>
<dbReference type="GO" id="GO:0005576">
    <property type="term" value="C:extracellular region"/>
    <property type="evidence" value="ECO:0007669"/>
    <property type="project" value="UniProtKB-SubCell"/>
</dbReference>
<dbReference type="GO" id="GO:0019871">
    <property type="term" value="F:sodium channel inhibitor activity"/>
    <property type="evidence" value="ECO:0007669"/>
    <property type="project" value="InterPro"/>
</dbReference>
<dbReference type="GO" id="GO:0090729">
    <property type="term" value="F:toxin activity"/>
    <property type="evidence" value="ECO:0007669"/>
    <property type="project" value="UniProtKB-KW"/>
</dbReference>
<dbReference type="GO" id="GO:0006952">
    <property type="term" value="P:defense response"/>
    <property type="evidence" value="ECO:0007669"/>
    <property type="project" value="InterPro"/>
</dbReference>
<dbReference type="CDD" id="cd23106">
    <property type="entry name" value="neurotoxins_LC_scorpion"/>
    <property type="match status" value="1"/>
</dbReference>
<dbReference type="FunFam" id="3.30.30.10:FF:000002">
    <property type="entry name" value="Alpha-like toxin BmK-M1"/>
    <property type="match status" value="1"/>
</dbReference>
<dbReference type="Gene3D" id="3.30.30.10">
    <property type="entry name" value="Knottin, scorpion toxin-like"/>
    <property type="match status" value="1"/>
</dbReference>
<dbReference type="InterPro" id="IPR044062">
    <property type="entry name" value="LCN-type_CS_alpha_beta_dom"/>
</dbReference>
<dbReference type="InterPro" id="IPR003614">
    <property type="entry name" value="Scorpion_toxin-like"/>
</dbReference>
<dbReference type="InterPro" id="IPR036574">
    <property type="entry name" value="Scorpion_toxin-like_sf"/>
</dbReference>
<dbReference type="InterPro" id="IPR018218">
    <property type="entry name" value="Scorpion_toxinL"/>
</dbReference>
<dbReference type="PRINTS" id="PR00285">
    <property type="entry name" value="SCORPNTOXIN"/>
</dbReference>
<dbReference type="SMART" id="SM00505">
    <property type="entry name" value="Knot1"/>
    <property type="match status" value="1"/>
</dbReference>
<dbReference type="SUPFAM" id="SSF57095">
    <property type="entry name" value="Scorpion toxin-like"/>
    <property type="match status" value="1"/>
</dbReference>
<dbReference type="PROSITE" id="PS51863">
    <property type="entry name" value="LCN_CSAB"/>
    <property type="match status" value="1"/>
</dbReference>